<dbReference type="EMBL" id="CP000943">
    <property type="protein sequence ID" value="ACA14911.1"/>
    <property type="molecule type" value="Genomic_DNA"/>
</dbReference>
<dbReference type="RefSeq" id="WP_012330329.1">
    <property type="nucleotide sequence ID" value="NC_010511.1"/>
</dbReference>
<dbReference type="SMR" id="B0UHV6"/>
<dbReference type="STRING" id="426117.M446_0340"/>
<dbReference type="KEGG" id="met:M446_0340"/>
<dbReference type="eggNOG" id="COG0199">
    <property type="taxonomic scope" value="Bacteria"/>
</dbReference>
<dbReference type="HOGENOM" id="CLU_139869_0_1_5"/>
<dbReference type="GO" id="GO:0005737">
    <property type="term" value="C:cytoplasm"/>
    <property type="evidence" value="ECO:0007669"/>
    <property type="project" value="UniProtKB-ARBA"/>
</dbReference>
<dbReference type="GO" id="GO:0015935">
    <property type="term" value="C:small ribosomal subunit"/>
    <property type="evidence" value="ECO:0007669"/>
    <property type="project" value="TreeGrafter"/>
</dbReference>
<dbReference type="GO" id="GO:0019843">
    <property type="term" value="F:rRNA binding"/>
    <property type="evidence" value="ECO:0007669"/>
    <property type="project" value="UniProtKB-UniRule"/>
</dbReference>
<dbReference type="GO" id="GO:0003735">
    <property type="term" value="F:structural constituent of ribosome"/>
    <property type="evidence" value="ECO:0007669"/>
    <property type="project" value="InterPro"/>
</dbReference>
<dbReference type="GO" id="GO:0006412">
    <property type="term" value="P:translation"/>
    <property type="evidence" value="ECO:0007669"/>
    <property type="project" value="UniProtKB-UniRule"/>
</dbReference>
<dbReference type="FunFam" id="1.10.287.1480:FF:000001">
    <property type="entry name" value="30S ribosomal protein S14"/>
    <property type="match status" value="1"/>
</dbReference>
<dbReference type="Gene3D" id="1.10.287.1480">
    <property type="match status" value="1"/>
</dbReference>
<dbReference type="HAMAP" id="MF_00537">
    <property type="entry name" value="Ribosomal_uS14_1"/>
    <property type="match status" value="1"/>
</dbReference>
<dbReference type="InterPro" id="IPR001209">
    <property type="entry name" value="Ribosomal_uS14"/>
</dbReference>
<dbReference type="InterPro" id="IPR023036">
    <property type="entry name" value="Ribosomal_uS14_bac/plastid"/>
</dbReference>
<dbReference type="InterPro" id="IPR018271">
    <property type="entry name" value="Ribosomal_uS14_CS"/>
</dbReference>
<dbReference type="NCBIfam" id="NF006477">
    <property type="entry name" value="PRK08881.1"/>
    <property type="match status" value="1"/>
</dbReference>
<dbReference type="PANTHER" id="PTHR19836">
    <property type="entry name" value="30S RIBOSOMAL PROTEIN S14"/>
    <property type="match status" value="1"/>
</dbReference>
<dbReference type="PANTHER" id="PTHR19836:SF19">
    <property type="entry name" value="SMALL RIBOSOMAL SUBUNIT PROTEIN US14M"/>
    <property type="match status" value="1"/>
</dbReference>
<dbReference type="Pfam" id="PF00253">
    <property type="entry name" value="Ribosomal_S14"/>
    <property type="match status" value="1"/>
</dbReference>
<dbReference type="SUPFAM" id="SSF57716">
    <property type="entry name" value="Glucocorticoid receptor-like (DNA-binding domain)"/>
    <property type="match status" value="1"/>
</dbReference>
<dbReference type="PROSITE" id="PS00527">
    <property type="entry name" value="RIBOSOMAL_S14"/>
    <property type="match status" value="1"/>
</dbReference>
<reference key="1">
    <citation type="submission" date="2008-02" db="EMBL/GenBank/DDBJ databases">
        <title>Complete sequence of chromosome of Methylobacterium sp. 4-46.</title>
        <authorList>
            <consortium name="US DOE Joint Genome Institute"/>
            <person name="Copeland A."/>
            <person name="Lucas S."/>
            <person name="Lapidus A."/>
            <person name="Glavina del Rio T."/>
            <person name="Dalin E."/>
            <person name="Tice H."/>
            <person name="Bruce D."/>
            <person name="Goodwin L."/>
            <person name="Pitluck S."/>
            <person name="Chertkov O."/>
            <person name="Brettin T."/>
            <person name="Detter J.C."/>
            <person name="Han C."/>
            <person name="Kuske C.R."/>
            <person name="Schmutz J."/>
            <person name="Larimer F."/>
            <person name="Land M."/>
            <person name="Hauser L."/>
            <person name="Kyrpides N."/>
            <person name="Ivanova N."/>
            <person name="Marx C.J."/>
            <person name="Richardson P."/>
        </authorList>
    </citation>
    <scope>NUCLEOTIDE SEQUENCE [LARGE SCALE GENOMIC DNA]</scope>
    <source>
        <strain>4-46</strain>
    </source>
</reference>
<accession>B0UHV6</accession>
<proteinExistence type="inferred from homology"/>
<keyword id="KW-0687">Ribonucleoprotein</keyword>
<keyword id="KW-0689">Ribosomal protein</keyword>
<keyword id="KW-0694">RNA-binding</keyword>
<keyword id="KW-0699">rRNA-binding</keyword>
<gene>
    <name evidence="1" type="primary">rpsN</name>
    <name type="ordered locus">M446_0340</name>
</gene>
<name>RS14_METS4</name>
<protein>
    <recommendedName>
        <fullName evidence="1">Small ribosomal subunit protein uS14</fullName>
    </recommendedName>
    <alternativeName>
        <fullName evidence="2">30S ribosomal protein S14</fullName>
    </alternativeName>
</protein>
<evidence type="ECO:0000255" key="1">
    <source>
        <dbReference type="HAMAP-Rule" id="MF_00537"/>
    </source>
</evidence>
<evidence type="ECO:0000305" key="2"/>
<organism>
    <name type="scientific">Methylobacterium sp. (strain 4-46)</name>
    <dbReference type="NCBI Taxonomy" id="426117"/>
    <lineage>
        <taxon>Bacteria</taxon>
        <taxon>Pseudomonadati</taxon>
        <taxon>Pseudomonadota</taxon>
        <taxon>Alphaproteobacteria</taxon>
        <taxon>Hyphomicrobiales</taxon>
        <taxon>Methylobacteriaceae</taxon>
        <taxon>Methylobacterium</taxon>
    </lineage>
</organism>
<feature type="chain" id="PRO_1000128450" description="Small ribosomal subunit protein uS14">
    <location>
        <begin position="1"/>
        <end position="101"/>
    </location>
</feature>
<sequence>MAKKSKIERNKQRVALVKRYAAKREALLSTANDESLPMEDRFEARLKLAELPRNANPTRIRNRCAMTGRPRAYYRKLGISRVALRDLGSRGMIPGLVKSSW</sequence>
<comment type="function">
    <text evidence="1">Binds 16S rRNA, required for the assembly of 30S particles and may also be responsible for determining the conformation of the 16S rRNA at the A site.</text>
</comment>
<comment type="subunit">
    <text evidence="1">Part of the 30S ribosomal subunit. Contacts proteins S3 and S10.</text>
</comment>
<comment type="similarity">
    <text evidence="1">Belongs to the universal ribosomal protein uS14 family.</text>
</comment>